<proteinExistence type="inferred from homology"/>
<reference key="1">
    <citation type="journal article" date="2003" name="Nucleic Acids Res.">
        <title>What's in the genome of a filamentous fungus? Analysis of the Neurospora genome sequence.</title>
        <authorList>
            <person name="Mannhaupt G."/>
            <person name="Montrone C."/>
            <person name="Haase D."/>
            <person name="Mewes H.-W."/>
            <person name="Aign V."/>
            <person name="Hoheisel J.D."/>
            <person name="Fartmann B."/>
            <person name="Nyakatura G."/>
            <person name="Kempken F."/>
            <person name="Maier J."/>
            <person name="Schulte U."/>
        </authorList>
    </citation>
    <scope>NUCLEOTIDE SEQUENCE [LARGE SCALE GENOMIC DNA]</scope>
    <source>
        <strain>ATCC 24698 / 74-OR23-1A / CBS 708.71 / DSM 1257 / FGSC 987</strain>
    </source>
</reference>
<reference key="2">
    <citation type="journal article" date="2003" name="Nature">
        <title>The genome sequence of the filamentous fungus Neurospora crassa.</title>
        <authorList>
            <person name="Galagan J.E."/>
            <person name="Calvo S.E."/>
            <person name="Borkovich K.A."/>
            <person name="Selker E.U."/>
            <person name="Read N.D."/>
            <person name="Jaffe D.B."/>
            <person name="FitzHugh W."/>
            <person name="Ma L.-J."/>
            <person name="Smirnov S."/>
            <person name="Purcell S."/>
            <person name="Rehman B."/>
            <person name="Elkins T."/>
            <person name="Engels R."/>
            <person name="Wang S."/>
            <person name="Nielsen C.B."/>
            <person name="Butler J."/>
            <person name="Endrizzi M."/>
            <person name="Qui D."/>
            <person name="Ianakiev P."/>
            <person name="Bell-Pedersen D."/>
            <person name="Nelson M.A."/>
            <person name="Werner-Washburne M."/>
            <person name="Selitrennikoff C.P."/>
            <person name="Kinsey J.A."/>
            <person name="Braun E.L."/>
            <person name="Zelter A."/>
            <person name="Schulte U."/>
            <person name="Kothe G.O."/>
            <person name="Jedd G."/>
            <person name="Mewes H.-W."/>
            <person name="Staben C."/>
            <person name="Marcotte E."/>
            <person name="Greenberg D."/>
            <person name="Roy A."/>
            <person name="Foley K."/>
            <person name="Naylor J."/>
            <person name="Stange-Thomann N."/>
            <person name="Barrett R."/>
            <person name="Gnerre S."/>
            <person name="Kamal M."/>
            <person name="Kamvysselis M."/>
            <person name="Mauceli E.W."/>
            <person name="Bielke C."/>
            <person name="Rudd S."/>
            <person name="Frishman D."/>
            <person name="Krystofova S."/>
            <person name="Rasmussen C."/>
            <person name="Metzenberg R.L."/>
            <person name="Perkins D.D."/>
            <person name="Kroken S."/>
            <person name="Cogoni C."/>
            <person name="Macino G."/>
            <person name="Catcheside D.E.A."/>
            <person name="Li W."/>
            <person name="Pratt R.J."/>
            <person name="Osmani S.A."/>
            <person name="DeSouza C.P.C."/>
            <person name="Glass N.L."/>
            <person name="Orbach M.J."/>
            <person name="Berglund J.A."/>
            <person name="Voelker R."/>
            <person name="Yarden O."/>
            <person name="Plamann M."/>
            <person name="Seiler S."/>
            <person name="Dunlap J.C."/>
            <person name="Radford A."/>
            <person name="Aramayo R."/>
            <person name="Natvig D.O."/>
            <person name="Alex L.A."/>
            <person name="Mannhaupt G."/>
            <person name="Ebbole D.J."/>
            <person name="Freitag M."/>
            <person name="Paulsen I."/>
            <person name="Sachs M.S."/>
            <person name="Lander E.S."/>
            <person name="Nusbaum C."/>
            <person name="Birren B.W."/>
        </authorList>
    </citation>
    <scope>NUCLEOTIDE SEQUENCE [LARGE SCALE GENOMIC DNA]</scope>
    <source>
        <strain>ATCC 24698 / 74-OR23-1A / CBS 708.71 / DSM 1257 / FGSC 987</strain>
    </source>
</reference>
<protein>
    <recommendedName>
        <fullName>Peptidyl-prolyl cis-trans isomerase-like 4</fullName>
        <shortName>PPIase</shortName>
        <ecNumber>5.2.1.8</ecNumber>
    </recommendedName>
    <alternativeName>
        <fullName>Rotamase</fullName>
    </alternativeName>
</protein>
<name>PPIL4_NEUCR</name>
<accession>Q871A4</accession>
<accession>Q7RZ18</accession>
<dbReference type="EC" id="5.2.1.8"/>
<dbReference type="EMBL" id="BX294027">
    <property type="protein sequence ID" value="CAD71104.1"/>
    <property type="molecule type" value="Genomic_DNA"/>
</dbReference>
<dbReference type="EMBL" id="CM002240">
    <property type="protein sequence ID" value="EAA28168.2"/>
    <property type="molecule type" value="Genomic_DNA"/>
</dbReference>
<dbReference type="RefSeq" id="XP_957404.2">
    <property type="nucleotide sequence ID" value="XM_952311.3"/>
</dbReference>
<dbReference type="SMR" id="Q871A4"/>
<dbReference type="STRING" id="367110.Q871A4"/>
<dbReference type="PaxDb" id="5141-EFNCRP00000007196"/>
<dbReference type="EnsemblFungi" id="EAA28168">
    <property type="protein sequence ID" value="EAA28168"/>
    <property type="gene ID" value="NCU10166"/>
</dbReference>
<dbReference type="KEGG" id="ncr:NCU10166"/>
<dbReference type="VEuPathDB" id="FungiDB:NCU10166"/>
<dbReference type="HOGENOM" id="CLU_018791_2_1_1"/>
<dbReference type="InParanoid" id="Q871A4"/>
<dbReference type="OMA" id="APKCCEN"/>
<dbReference type="OrthoDB" id="2083at2759"/>
<dbReference type="Proteomes" id="UP000001805">
    <property type="component" value="Chromosome 2, Linkage Group V"/>
</dbReference>
<dbReference type="GO" id="GO:0005634">
    <property type="term" value="C:nucleus"/>
    <property type="evidence" value="ECO:0000318"/>
    <property type="project" value="GO_Central"/>
</dbReference>
<dbReference type="GO" id="GO:0003755">
    <property type="term" value="F:peptidyl-prolyl cis-trans isomerase activity"/>
    <property type="evidence" value="ECO:0007669"/>
    <property type="project" value="UniProtKB-KW"/>
</dbReference>
<dbReference type="GO" id="GO:0003723">
    <property type="term" value="F:RNA binding"/>
    <property type="evidence" value="ECO:0007669"/>
    <property type="project" value="UniProtKB-KW"/>
</dbReference>
<dbReference type="CDD" id="cd01921">
    <property type="entry name" value="cyclophilin_RRM"/>
    <property type="match status" value="1"/>
</dbReference>
<dbReference type="CDD" id="cd12235">
    <property type="entry name" value="RRM_PPIL4"/>
    <property type="match status" value="1"/>
</dbReference>
<dbReference type="FunFam" id="2.40.100.10:FF:000015">
    <property type="entry name" value="Peptidyl-prolyl cis-trans isomerase"/>
    <property type="match status" value="1"/>
</dbReference>
<dbReference type="FunFam" id="3.30.70.330:FF:000287">
    <property type="entry name" value="Peptidyl-prolyl cis-trans isomerase"/>
    <property type="match status" value="1"/>
</dbReference>
<dbReference type="Gene3D" id="3.30.70.330">
    <property type="match status" value="1"/>
</dbReference>
<dbReference type="Gene3D" id="2.40.100.10">
    <property type="entry name" value="Cyclophilin-like"/>
    <property type="match status" value="1"/>
</dbReference>
<dbReference type="InterPro" id="IPR035542">
    <property type="entry name" value="CRIP"/>
</dbReference>
<dbReference type="InterPro" id="IPR029000">
    <property type="entry name" value="Cyclophilin-like_dom_sf"/>
</dbReference>
<dbReference type="InterPro" id="IPR002130">
    <property type="entry name" value="Cyclophilin-type_PPIase_dom"/>
</dbReference>
<dbReference type="InterPro" id="IPR035538">
    <property type="entry name" value="Cyclophilin_PPIL4"/>
</dbReference>
<dbReference type="InterPro" id="IPR012677">
    <property type="entry name" value="Nucleotide-bd_a/b_plait_sf"/>
</dbReference>
<dbReference type="InterPro" id="IPR035979">
    <property type="entry name" value="RBD_domain_sf"/>
</dbReference>
<dbReference type="InterPro" id="IPR000504">
    <property type="entry name" value="RRM_dom"/>
</dbReference>
<dbReference type="PANTHER" id="PTHR45843">
    <property type="entry name" value="PEPTIDYL-PROLYL CIS-TRANS ISOMERASE-LIKE 4"/>
    <property type="match status" value="1"/>
</dbReference>
<dbReference type="PANTHER" id="PTHR45843:SF1">
    <property type="entry name" value="PEPTIDYL-PROLYL CIS-TRANS ISOMERASE-LIKE 4"/>
    <property type="match status" value="1"/>
</dbReference>
<dbReference type="Pfam" id="PF00160">
    <property type="entry name" value="Pro_isomerase"/>
    <property type="match status" value="1"/>
</dbReference>
<dbReference type="Pfam" id="PF00076">
    <property type="entry name" value="RRM_1"/>
    <property type="match status" value="1"/>
</dbReference>
<dbReference type="PRINTS" id="PR00153">
    <property type="entry name" value="CSAPPISMRASE"/>
</dbReference>
<dbReference type="SMART" id="SM00360">
    <property type="entry name" value="RRM"/>
    <property type="match status" value="1"/>
</dbReference>
<dbReference type="SUPFAM" id="SSF50891">
    <property type="entry name" value="Cyclophilin-like"/>
    <property type="match status" value="1"/>
</dbReference>
<dbReference type="SUPFAM" id="SSF54928">
    <property type="entry name" value="RNA-binding domain, RBD"/>
    <property type="match status" value="1"/>
</dbReference>
<dbReference type="PROSITE" id="PS50072">
    <property type="entry name" value="CSA_PPIASE_2"/>
    <property type="match status" value="1"/>
</dbReference>
<dbReference type="PROSITE" id="PS50102">
    <property type="entry name" value="RRM"/>
    <property type="match status" value="1"/>
</dbReference>
<organism>
    <name type="scientific">Neurospora crassa (strain ATCC 24698 / 74-OR23-1A / CBS 708.71 / DSM 1257 / FGSC 987)</name>
    <dbReference type="NCBI Taxonomy" id="367110"/>
    <lineage>
        <taxon>Eukaryota</taxon>
        <taxon>Fungi</taxon>
        <taxon>Dikarya</taxon>
        <taxon>Ascomycota</taxon>
        <taxon>Pezizomycotina</taxon>
        <taxon>Sordariomycetes</taxon>
        <taxon>Sordariomycetidae</taxon>
        <taxon>Sordariales</taxon>
        <taxon>Sordariaceae</taxon>
        <taxon>Neurospora</taxon>
    </lineage>
</organism>
<sequence length="494" mass="56500">MSVLLETSAGDIVIDLLVDYAPKMCENFLKLCKVKYYNFSPIHSIQKSFSFQTGDPLGPLSSESDGGQSIWGLLSGDPSEKTFPALFHPKLKHLERGTVSMATVPHPSDPDTRLAGSQFIVTLGDNTDYLDGKAAIFGKVVEGFDVLEKINDAIVDERGHPLVDIRIKHTVILDDPYPDPAGMREPSASPPPSKAQLATVRITEGEELLDVEASEEAAAEAERRRREREAAAQALTLEMMGDLPFAEVKPPENVLFVCKLNPVTTDEDLELIFSRFGKILSCEVIRDQKTGDSLQYAFIEFEDKKSCEEAYSKMDSVLIDDRRIHVDFSQSVSKLSDVWRSETNSKRKSAARRGGGGWGGVDELEKWRKYRDEDVEWRNDDSYQMVHGVEDLKGRHDGDKPPVRDSRPDVGGGRDRSTSRRSRSPRRDRDRRDDRDNRRGPRDADRRRDDRDLDRRDRRGDRSRDRYRDRDYNDRDHRRGRDRDNRGRDDYRRR</sequence>
<feature type="chain" id="PRO_0000232979" description="Peptidyl-prolyl cis-trans isomerase-like 4">
    <location>
        <begin position="1"/>
        <end position="494"/>
    </location>
</feature>
<feature type="domain" description="PPIase cyclophilin-type" evidence="3">
    <location>
        <begin position="1"/>
        <end position="172"/>
    </location>
</feature>
<feature type="domain" description="RRM" evidence="4">
    <location>
        <begin position="253"/>
        <end position="331"/>
    </location>
</feature>
<feature type="region of interest" description="Disordered" evidence="5">
    <location>
        <begin position="176"/>
        <end position="196"/>
    </location>
</feature>
<feature type="region of interest" description="Disordered" evidence="5">
    <location>
        <begin position="391"/>
        <end position="494"/>
    </location>
</feature>
<feature type="coiled-coil region" evidence="2">
    <location>
        <begin position="206"/>
        <end position="240"/>
    </location>
</feature>
<feature type="compositionally biased region" description="Basic and acidic residues" evidence="5">
    <location>
        <begin position="391"/>
        <end position="418"/>
    </location>
</feature>
<feature type="compositionally biased region" description="Basic and acidic residues" evidence="5">
    <location>
        <begin position="425"/>
        <end position="494"/>
    </location>
</feature>
<gene>
    <name type="primary">cyp-6</name>
    <name type="ORF">B8G12.450</name>
    <name type="ORF">NCU07179</name>
</gene>
<evidence type="ECO:0000250" key="1"/>
<evidence type="ECO:0000255" key="2"/>
<evidence type="ECO:0000255" key="3">
    <source>
        <dbReference type="PROSITE-ProRule" id="PRU00156"/>
    </source>
</evidence>
<evidence type="ECO:0000255" key="4">
    <source>
        <dbReference type="PROSITE-ProRule" id="PRU00176"/>
    </source>
</evidence>
<evidence type="ECO:0000256" key="5">
    <source>
        <dbReference type="SAM" id="MobiDB-lite"/>
    </source>
</evidence>
<evidence type="ECO:0000305" key="6"/>
<comment type="function">
    <text evidence="1">PPIases accelerate the folding of proteins. It catalyzes the cis-trans isomerization of proline imidic peptide bonds in oligopeptides (By similarity).</text>
</comment>
<comment type="catalytic activity">
    <reaction>
        <text>[protein]-peptidylproline (omega=180) = [protein]-peptidylproline (omega=0)</text>
        <dbReference type="Rhea" id="RHEA:16237"/>
        <dbReference type="Rhea" id="RHEA-COMP:10747"/>
        <dbReference type="Rhea" id="RHEA-COMP:10748"/>
        <dbReference type="ChEBI" id="CHEBI:83833"/>
        <dbReference type="ChEBI" id="CHEBI:83834"/>
        <dbReference type="EC" id="5.2.1.8"/>
    </reaction>
</comment>
<comment type="subcellular location">
    <subcellularLocation>
        <location evidence="1">Nucleus</location>
    </subcellularLocation>
</comment>
<comment type="similarity">
    <text evidence="6">Belongs to the cyclophilin-type PPIase family. PPIL4 subfamily.</text>
</comment>
<keyword id="KW-0175">Coiled coil</keyword>
<keyword id="KW-0413">Isomerase</keyword>
<keyword id="KW-0539">Nucleus</keyword>
<keyword id="KW-1185">Reference proteome</keyword>
<keyword id="KW-0694">RNA-binding</keyword>
<keyword id="KW-0697">Rotamase</keyword>